<dbReference type="EMBL" id="BX950851">
    <property type="protein sequence ID" value="CAG73546.1"/>
    <property type="status" value="ALT_INIT"/>
    <property type="molecule type" value="Genomic_DNA"/>
</dbReference>
<dbReference type="RefSeq" id="WP_039289892.1">
    <property type="nucleotide sequence ID" value="NC_004547.2"/>
</dbReference>
<dbReference type="SMR" id="Q6D9I4"/>
<dbReference type="STRING" id="218491.ECA0631"/>
<dbReference type="KEGG" id="eca:ECA0631"/>
<dbReference type="eggNOG" id="COG3237">
    <property type="taxonomic scope" value="Bacteria"/>
</dbReference>
<dbReference type="HOGENOM" id="CLU_135567_4_1_6"/>
<dbReference type="OrthoDB" id="9796058at2"/>
<dbReference type="Proteomes" id="UP000007966">
    <property type="component" value="Chromosome"/>
</dbReference>
<dbReference type="Gene3D" id="1.10.1470.10">
    <property type="entry name" value="YjbJ"/>
    <property type="match status" value="1"/>
</dbReference>
<dbReference type="InterPro" id="IPR008462">
    <property type="entry name" value="CsbD"/>
</dbReference>
<dbReference type="InterPro" id="IPR050423">
    <property type="entry name" value="UPF0337_stress_rsp"/>
</dbReference>
<dbReference type="InterPro" id="IPR026042">
    <property type="entry name" value="YjbJ"/>
</dbReference>
<dbReference type="InterPro" id="IPR036629">
    <property type="entry name" value="YjbJ_sf"/>
</dbReference>
<dbReference type="NCBIfam" id="NF007748">
    <property type="entry name" value="PRK10428.1"/>
    <property type="match status" value="1"/>
</dbReference>
<dbReference type="PANTHER" id="PTHR34977">
    <property type="entry name" value="UPF0337 PROTEIN YJBJ"/>
    <property type="match status" value="1"/>
</dbReference>
<dbReference type="PANTHER" id="PTHR34977:SF1">
    <property type="entry name" value="UPF0337 PROTEIN YJBJ"/>
    <property type="match status" value="1"/>
</dbReference>
<dbReference type="Pfam" id="PF05532">
    <property type="entry name" value="CsbD"/>
    <property type="match status" value="1"/>
</dbReference>
<dbReference type="PIRSF" id="PIRSF039008">
    <property type="entry name" value="YjbJ"/>
    <property type="match status" value="1"/>
</dbReference>
<dbReference type="SUPFAM" id="SSF69047">
    <property type="entry name" value="Hypothetical protein YjbJ"/>
    <property type="match status" value="1"/>
</dbReference>
<comment type="similarity">
    <text evidence="1">Belongs to the UPF0337 (CsbD) family.</text>
</comment>
<comment type="sequence caution" evidence="1">
    <conflict type="erroneous initiation">
        <sequence resource="EMBL-CDS" id="CAG73546"/>
    </conflict>
</comment>
<accession>Q6D9I4</accession>
<proteinExistence type="inferred from homology"/>
<feature type="chain" id="PRO_0000210003" description="UPF0337 protein ECA0631">
    <location>
        <begin position="1"/>
        <end position="69"/>
    </location>
</feature>
<gene>
    <name type="ordered locus">ECA0631</name>
</gene>
<organism>
    <name type="scientific">Pectobacterium atrosepticum (strain SCRI 1043 / ATCC BAA-672)</name>
    <name type="common">Erwinia carotovora subsp. atroseptica</name>
    <dbReference type="NCBI Taxonomy" id="218491"/>
    <lineage>
        <taxon>Bacteria</taxon>
        <taxon>Pseudomonadati</taxon>
        <taxon>Pseudomonadota</taxon>
        <taxon>Gammaproteobacteria</taxon>
        <taxon>Enterobacterales</taxon>
        <taxon>Pectobacteriaceae</taxon>
        <taxon>Pectobacterium</taxon>
    </lineage>
</organism>
<protein>
    <recommendedName>
        <fullName>UPF0337 protein ECA0631</fullName>
    </recommendedName>
</protein>
<name>Y631_PECAS</name>
<reference key="1">
    <citation type="journal article" date="2004" name="Proc. Natl. Acad. Sci. U.S.A.">
        <title>Genome sequence of the enterobacterial phytopathogen Erwinia carotovora subsp. atroseptica and characterization of virulence factors.</title>
        <authorList>
            <person name="Bell K.S."/>
            <person name="Sebaihia M."/>
            <person name="Pritchard L."/>
            <person name="Holden M.T.G."/>
            <person name="Hyman L.J."/>
            <person name="Holeva M.C."/>
            <person name="Thomson N.R."/>
            <person name="Bentley S.D."/>
            <person name="Churcher L.J.C."/>
            <person name="Mungall K."/>
            <person name="Atkin R."/>
            <person name="Bason N."/>
            <person name="Brooks K."/>
            <person name="Chillingworth T."/>
            <person name="Clark K."/>
            <person name="Doggett J."/>
            <person name="Fraser A."/>
            <person name="Hance Z."/>
            <person name="Hauser H."/>
            <person name="Jagels K."/>
            <person name="Moule S."/>
            <person name="Norbertczak H."/>
            <person name="Ormond D."/>
            <person name="Price C."/>
            <person name="Quail M.A."/>
            <person name="Sanders M."/>
            <person name="Walker D."/>
            <person name="Whitehead S."/>
            <person name="Salmond G.P.C."/>
            <person name="Birch P.R.J."/>
            <person name="Parkhill J."/>
            <person name="Toth I.K."/>
        </authorList>
    </citation>
    <scope>NUCLEOTIDE SEQUENCE [LARGE SCALE GENOMIC DNA]</scope>
    <source>
        <strain>SCRI 1043 / ATCC BAA-672</strain>
    </source>
</reference>
<sequence length="69" mass="8329">MNKDQASGNWKQFKGKAKEQWGKLTDDDLTVIEGKRDQLVGRIQERYGYEKEAAEKEVKHWEDHHKYHW</sequence>
<evidence type="ECO:0000305" key="1"/>
<keyword id="KW-1185">Reference proteome</keyword>